<name>COQ7_PARC0</name>
<protein>
    <recommendedName>
        <fullName evidence="1">3-demethoxyubiquinol 3-hydroxylase</fullName>
        <shortName evidence="1">DMQ hydroxylase</shortName>
        <ecNumber evidence="1">1.14.99.60</ecNumber>
    </recommendedName>
    <alternativeName>
        <fullName evidence="1">2-nonaprenyl-3-methyl-6-methoxy-1,4-benzoquinol hydroxylase</fullName>
    </alternativeName>
</protein>
<reference key="1">
    <citation type="submission" date="2006-12" db="EMBL/GenBank/DDBJ databases">
        <title>Complete sequence of Acidovorax avenae subsp. citrulli AAC00-1.</title>
        <authorList>
            <person name="Copeland A."/>
            <person name="Lucas S."/>
            <person name="Lapidus A."/>
            <person name="Barry K."/>
            <person name="Detter J.C."/>
            <person name="Glavina del Rio T."/>
            <person name="Dalin E."/>
            <person name="Tice H."/>
            <person name="Pitluck S."/>
            <person name="Kiss H."/>
            <person name="Brettin T."/>
            <person name="Bruce D."/>
            <person name="Han C."/>
            <person name="Tapia R."/>
            <person name="Gilna P."/>
            <person name="Schmutz J."/>
            <person name="Larimer F."/>
            <person name="Land M."/>
            <person name="Hauser L."/>
            <person name="Kyrpides N."/>
            <person name="Kim E."/>
            <person name="Stahl D."/>
            <person name="Richardson P."/>
        </authorList>
    </citation>
    <scope>NUCLEOTIDE SEQUENCE [LARGE SCALE GENOMIC DNA]</scope>
    <source>
        <strain>AAC00-1</strain>
    </source>
</reference>
<gene>
    <name evidence="1" type="primary">coq7</name>
    <name type="ordered locus">Aave_0931</name>
</gene>
<accession>A1TKP1</accession>
<keyword id="KW-1003">Cell membrane</keyword>
<keyword id="KW-0408">Iron</keyword>
<keyword id="KW-0472">Membrane</keyword>
<keyword id="KW-0479">Metal-binding</keyword>
<keyword id="KW-0503">Monooxygenase</keyword>
<keyword id="KW-0560">Oxidoreductase</keyword>
<keyword id="KW-0831">Ubiquinone biosynthesis</keyword>
<dbReference type="EC" id="1.14.99.60" evidence="1"/>
<dbReference type="EMBL" id="CP000512">
    <property type="protein sequence ID" value="ABM31529.1"/>
    <property type="molecule type" value="Genomic_DNA"/>
</dbReference>
<dbReference type="RefSeq" id="WP_011794087.1">
    <property type="nucleotide sequence ID" value="NC_008752.1"/>
</dbReference>
<dbReference type="SMR" id="A1TKP1"/>
<dbReference type="STRING" id="397945.Aave_0931"/>
<dbReference type="GeneID" id="79790584"/>
<dbReference type="KEGG" id="aav:Aave_0931"/>
<dbReference type="eggNOG" id="COG2941">
    <property type="taxonomic scope" value="Bacteria"/>
</dbReference>
<dbReference type="HOGENOM" id="CLU_088601_0_0_4"/>
<dbReference type="OrthoDB" id="5192789at2"/>
<dbReference type="UniPathway" id="UPA00232"/>
<dbReference type="Proteomes" id="UP000002596">
    <property type="component" value="Chromosome"/>
</dbReference>
<dbReference type="GO" id="GO:0005886">
    <property type="term" value="C:plasma membrane"/>
    <property type="evidence" value="ECO:0007669"/>
    <property type="project" value="UniProtKB-SubCell"/>
</dbReference>
<dbReference type="GO" id="GO:0008682">
    <property type="term" value="F:3-demethoxyubiquinol 3-hydroxylase activity"/>
    <property type="evidence" value="ECO:0007669"/>
    <property type="project" value="UniProtKB-EC"/>
</dbReference>
<dbReference type="GO" id="GO:0046872">
    <property type="term" value="F:metal ion binding"/>
    <property type="evidence" value="ECO:0007669"/>
    <property type="project" value="UniProtKB-KW"/>
</dbReference>
<dbReference type="GO" id="GO:0006744">
    <property type="term" value="P:ubiquinone biosynthetic process"/>
    <property type="evidence" value="ECO:0007669"/>
    <property type="project" value="UniProtKB-UniRule"/>
</dbReference>
<dbReference type="CDD" id="cd01042">
    <property type="entry name" value="DMQH"/>
    <property type="match status" value="1"/>
</dbReference>
<dbReference type="Gene3D" id="1.20.1260.10">
    <property type="match status" value="1"/>
</dbReference>
<dbReference type="HAMAP" id="MF_01658">
    <property type="entry name" value="COQ7"/>
    <property type="match status" value="1"/>
</dbReference>
<dbReference type="InterPro" id="IPR047809">
    <property type="entry name" value="COQ7_proteobact"/>
</dbReference>
<dbReference type="InterPro" id="IPR012347">
    <property type="entry name" value="Ferritin-like"/>
</dbReference>
<dbReference type="InterPro" id="IPR009078">
    <property type="entry name" value="Ferritin-like_SF"/>
</dbReference>
<dbReference type="InterPro" id="IPR011566">
    <property type="entry name" value="Ubq_synth_Coq7"/>
</dbReference>
<dbReference type="NCBIfam" id="NF033656">
    <property type="entry name" value="DMQ_monoox_COQ7"/>
    <property type="match status" value="1"/>
</dbReference>
<dbReference type="PANTHER" id="PTHR11237:SF4">
    <property type="entry name" value="5-DEMETHOXYUBIQUINONE HYDROXYLASE, MITOCHONDRIAL"/>
    <property type="match status" value="1"/>
</dbReference>
<dbReference type="PANTHER" id="PTHR11237">
    <property type="entry name" value="COENZYME Q10 BIOSYNTHESIS PROTEIN 7"/>
    <property type="match status" value="1"/>
</dbReference>
<dbReference type="Pfam" id="PF03232">
    <property type="entry name" value="COQ7"/>
    <property type="match status" value="1"/>
</dbReference>
<dbReference type="SUPFAM" id="SSF47240">
    <property type="entry name" value="Ferritin-like"/>
    <property type="match status" value="1"/>
</dbReference>
<feature type="chain" id="PRO_0000338650" description="3-demethoxyubiquinol 3-hydroxylase">
    <location>
        <begin position="1"/>
        <end position="205"/>
    </location>
</feature>
<feature type="binding site" evidence="1">
    <location>
        <position position="54"/>
    </location>
    <ligand>
        <name>Fe cation</name>
        <dbReference type="ChEBI" id="CHEBI:24875"/>
        <label>1</label>
    </ligand>
</feature>
<feature type="binding site" evidence="1">
    <location>
        <position position="84"/>
    </location>
    <ligand>
        <name>Fe cation</name>
        <dbReference type="ChEBI" id="CHEBI:24875"/>
        <label>1</label>
    </ligand>
</feature>
<feature type="binding site" evidence="1">
    <location>
        <position position="84"/>
    </location>
    <ligand>
        <name>Fe cation</name>
        <dbReference type="ChEBI" id="CHEBI:24875"/>
        <label>2</label>
    </ligand>
</feature>
<feature type="binding site" evidence="1">
    <location>
        <position position="87"/>
    </location>
    <ligand>
        <name>Fe cation</name>
        <dbReference type="ChEBI" id="CHEBI:24875"/>
        <label>1</label>
    </ligand>
</feature>
<feature type="binding site" evidence="1">
    <location>
        <position position="136"/>
    </location>
    <ligand>
        <name>Fe cation</name>
        <dbReference type="ChEBI" id="CHEBI:24875"/>
        <label>2</label>
    </ligand>
</feature>
<feature type="binding site" evidence="1">
    <location>
        <position position="168"/>
    </location>
    <ligand>
        <name>Fe cation</name>
        <dbReference type="ChEBI" id="CHEBI:24875"/>
        <label>1</label>
    </ligand>
</feature>
<feature type="binding site" evidence="1">
    <location>
        <position position="168"/>
    </location>
    <ligand>
        <name>Fe cation</name>
        <dbReference type="ChEBI" id="CHEBI:24875"/>
        <label>2</label>
    </ligand>
</feature>
<feature type="binding site" evidence="1">
    <location>
        <position position="171"/>
    </location>
    <ligand>
        <name>Fe cation</name>
        <dbReference type="ChEBI" id="CHEBI:24875"/>
        <label>2</label>
    </ligand>
</feature>
<evidence type="ECO:0000255" key="1">
    <source>
        <dbReference type="HAMAP-Rule" id="MF_01658"/>
    </source>
</evidence>
<proteinExistence type="inferred from homology"/>
<sequence>MDKLLIAADNALRTLFARPRAAQPSPARGLPEGDLSPAQRREAGALMRVNHVGEVCAQALYMGQAAVTRDPALRARLMEAAREETDHLAWTAERLQALGSRPSLLNPLWFAGAFAIGWTAAQVSDAASLGFVVETENQVARHLQGHLERMPPQDAASLAVIERMQADEQRHADDARAAGASDLPAPARVLMAAAARVMTATAHHI</sequence>
<comment type="function">
    <text evidence="1">Catalyzes the hydroxylation of 2-nonaprenyl-3-methyl-6-methoxy-1,4-benzoquinol during ubiquinone biosynthesis.</text>
</comment>
<comment type="catalytic activity">
    <reaction evidence="1">
        <text>a 5-methoxy-2-methyl-3-(all-trans-polyprenyl)benzene-1,4-diol + AH2 + O2 = a 3-demethylubiquinol + A + H2O</text>
        <dbReference type="Rhea" id="RHEA:50908"/>
        <dbReference type="Rhea" id="RHEA-COMP:10859"/>
        <dbReference type="Rhea" id="RHEA-COMP:10914"/>
        <dbReference type="ChEBI" id="CHEBI:13193"/>
        <dbReference type="ChEBI" id="CHEBI:15377"/>
        <dbReference type="ChEBI" id="CHEBI:15379"/>
        <dbReference type="ChEBI" id="CHEBI:17499"/>
        <dbReference type="ChEBI" id="CHEBI:84167"/>
        <dbReference type="ChEBI" id="CHEBI:84422"/>
        <dbReference type="EC" id="1.14.99.60"/>
    </reaction>
</comment>
<comment type="cofactor">
    <cofactor evidence="1">
        <name>Fe cation</name>
        <dbReference type="ChEBI" id="CHEBI:24875"/>
    </cofactor>
    <text evidence="1">Binds 2 iron ions per subunit.</text>
</comment>
<comment type="pathway">
    <text evidence="1">Cofactor biosynthesis; ubiquinone biosynthesis.</text>
</comment>
<comment type="subcellular location">
    <subcellularLocation>
        <location evidence="1">Cell membrane</location>
        <topology evidence="1">Peripheral membrane protein</topology>
    </subcellularLocation>
</comment>
<comment type="similarity">
    <text evidence="1">Belongs to the COQ7 family.</text>
</comment>
<organism>
    <name type="scientific">Paracidovorax citrulli (strain AAC00-1)</name>
    <name type="common">Acidovorax citrulli</name>
    <dbReference type="NCBI Taxonomy" id="397945"/>
    <lineage>
        <taxon>Bacteria</taxon>
        <taxon>Pseudomonadati</taxon>
        <taxon>Pseudomonadota</taxon>
        <taxon>Betaproteobacteria</taxon>
        <taxon>Burkholderiales</taxon>
        <taxon>Comamonadaceae</taxon>
        <taxon>Paracidovorax</taxon>
    </lineage>
</organism>